<keyword id="KW-0025">Alternative splicing</keyword>
<keyword id="KW-1003">Cell membrane</keyword>
<keyword id="KW-0407">Ion channel</keyword>
<keyword id="KW-0406">Ion transport</keyword>
<keyword id="KW-0472">Membrane</keyword>
<keyword id="KW-0630">Potassium</keyword>
<keyword id="KW-0631">Potassium channel</keyword>
<keyword id="KW-0633">Potassium transport</keyword>
<keyword id="KW-1267">Proteomics identification</keyword>
<keyword id="KW-1185">Reference proteome</keyword>
<keyword id="KW-0812">Transmembrane</keyword>
<keyword id="KW-1133">Transmembrane helix</keyword>
<keyword id="KW-0813">Transport</keyword>
<keyword id="KW-0851">Voltage-gated channel</keyword>
<reference key="1">
    <citation type="journal article" date="1997" name="Biochem. Biophys. Res. Commun.">
        <title>Isolation, characterization, and mapping of two human potassium channels.</title>
        <authorList>
            <person name="Su K."/>
            <person name="Kyaw H."/>
            <person name="Fan P."/>
            <person name="Zeng Z."/>
            <person name="Shell B.K."/>
            <person name="Carter K.C."/>
            <person name="Li Y."/>
        </authorList>
    </citation>
    <scope>NUCLEOTIDE SEQUENCE [MRNA] (ISOFORM 1)</scope>
    <scope>TISSUE SPECIFICITY</scope>
    <source>
        <tissue>Fetal brain</tissue>
    </source>
</reference>
<reference key="2">
    <citation type="journal article" date="2004" name="Nat. Genet.">
        <title>Complete sequencing and characterization of 21,243 full-length human cDNAs.</title>
        <authorList>
            <person name="Ota T."/>
            <person name="Suzuki Y."/>
            <person name="Nishikawa T."/>
            <person name="Otsuki T."/>
            <person name="Sugiyama T."/>
            <person name="Irie R."/>
            <person name="Wakamatsu A."/>
            <person name="Hayashi K."/>
            <person name="Sato H."/>
            <person name="Nagai K."/>
            <person name="Kimura K."/>
            <person name="Makita H."/>
            <person name="Sekine M."/>
            <person name="Obayashi M."/>
            <person name="Nishi T."/>
            <person name="Shibahara T."/>
            <person name="Tanaka T."/>
            <person name="Ishii S."/>
            <person name="Yamamoto J."/>
            <person name="Saito K."/>
            <person name="Kawai Y."/>
            <person name="Isono Y."/>
            <person name="Nakamura Y."/>
            <person name="Nagahari K."/>
            <person name="Murakami K."/>
            <person name="Yasuda T."/>
            <person name="Iwayanagi T."/>
            <person name="Wagatsuma M."/>
            <person name="Shiratori A."/>
            <person name="Sudo H."/>
            <person name="Hosoiri T."/>
            <person name="Kaku Y."/>
            <person name="Kodaira H."/>
            <person name="Kondo H."/>
            <person name="Sugawara M."/>
            <person name="Takahashi M."/>
            <person name="Kanda K."/>
            <person name="Yokoi T."/>
            <person name="Furuya T."/>
            <person name="Kikkawa E."/>
            <person name="Omura Y."/>
            <person name="Abe K."/>
            <person name="Kamihara K."/>
            <person name="Katsuta N."/>
            <person name="Sato K."/>
            <person name="Tanikawa M."/>
            <person name="Yamazaki M."/>
            <person name="Ninomiya K."/>
            <person name="Ishibashi T."/>
            <person name="Yamashita H."/>
            <person name="Murakawa K."/>
            <person name="Fujimori K."/>
            <person name="Tanai H."/>
            <person name="Kimata M."/>
            <person name="Watanabe M."/>
            <person name="Hiraoka S."/>
            <person name="Chiba Y."/>
            <person name="Ishida S."/>
            <person name="Ono Y."/>
            <person name="Takiguchi S."/>
            <person name="Watanabe S."/>
            <person name="Yosida M."/>
            <person name="Hotuta T."/>
            <person name="Kusano J."/>
            <person name="Kanehori K."/>
            <person name="Takahashi-Fujii A."/>
            <person name="Hara H."/>
            <person name="Tanase T.-O."/>
            <person name="Nomura Y."/>
            <person name="Togiya S."/>
            <person name="Komai F."/>
            <person name="Hara R."/>
            <person name="Takeuchi K."/>
            <person name="Arita M."/>
            <person name="Imose N."/>
            <person name="Musashino K."/>
            <person name="Yuuki H."/>
            <person name="Oshima A."/>
            <person name="Sasaki N."/>
            <person name="Aotsuka S."/>
            <person name="Yoshikawa Y."/>
            <person name="Matsunawa H."/>
            <person name="Ichihara T."/>
            <person name="Shiohata N."/>
            <person name="Sano S."/>
            <person name="Moriya S."/>
            <person name="Momiyama H."/>
            <person name="Satoh N."/>
            <person name="Takami S."/>
            <person name="Terashima Y."/>
            <person name="Suzuki O."/>
            <person name="Nakagawa S."/>
            <person name="Senoh A."/>
            <person name="Mizoguchi H."/>
            <person name="Goto Y."/>
            <person name="Shimizu F."/>
            <person name="Wakebe H."/>
            <person name="Hishigaki H."/>
            <person name="Watanabe T."/>
            <person name="Sugiyama A."/>
            <person name="Takemoto M."/>
            <person name="Kawakami B."/>
            <person name="Yamazaki M."/>
            <person name="Watanabe K."/>
            <person name="Kumagai A."/>
            <person name="Itakura S."/>
            <person name="Fukuzumi Y."/>
            <person name="Fujimori Y."/>
            <person name="Komiyama M."/>
            <person name="Tashiro H."/>
            <person name="Tanigami A."/>
            <person name="Fujiwara T."/>
            <person name="Ono T."/>
            <person name="Yamada K."/>
            <person name="Fujii Y."/>
            <person name="Ozaki K."/>
            <person name="Hirao M."/>
            <person name="Ohmori Y."/>
            <person name="Kawabata A."/>
            <person name="Hikiji T."/>
            <person name="Kobatake N."/>
            <person name="Inagaki H."/>
            <person name="Ikema Y."/>
            <person name="Okamoto S."/>
            <person name="Okitani R."/>
            <person name="Kawakami T."/>
            <person name="Noguchi S."/>
            <person name="Itoh T."/>
            <person name="Shigeta K."/>
            <person name="Senba T."/>
            <person name="Matsumura K."/>
            <person name="Nakajima Y."/>
            <person name="Mizuno T."/>
            <person name="Morinaga M."/>
            <person name="Sasaki M."/>
            <person name="Togashi T."/>
            <person name="Oyama M."/>
            <person name="Hata H."/>
            <person name="Watanabe M."/>
            <person name="Komatsu T."/>
            <person name="Mizushima-Sugano J."/>
            <person name="Satoh T."/>
            <person name="Shirai Y."/>
            <person name="Takahashi Y."/>
            <person name="Nakagawa K."/>
            <person name="Okumura K."/>
            <person name="Nagase T."/>
            <person name="Nomura N."/>
            <person name="Kikuchi H."/>
            <person name="Masuho Y."/>
            <person name="Yamashita R."/>
            <person name="Nakai K."/>
            <person name="Yada T."/>
            <person name="Nakamura Y."/>
            <person name="Ohara O."/>
            <person name="Isogai T."/>
            <person name="Sugano S."/>
        </authorList>
    </citation>
    <scope>NUCLEOTIDE SEQUENCE [LARGE SCALE MRNA] (ISOFORM 1)</scope>
</reference>
<reference key="3">
    <citation type="journal article" date="2001" name="Nature">
        <title>The DNA sequence and comparative analysis of human chromosome 20.</title>
        <authorList>
            <person name="Deloukas P."/>
            <person name="Matthews L.H."/>
            <person name="Ashurst J.L."/>
            <person name="Burton J."/>
            <person name="Gilbert J.G.R."/>
            <person name="Jones M."/>
            <person name="Stavrides G."/>
            <person name="Almeida J.P."/>
            <person name="Babbage A.K."/>
            <person name="Bagguley C.L."/>
            <person name="Bailey J."/>
            <person name="Barlow K.F."/>
            <person name="Bates K.N."/>
            <person name="Beard L.M."/>
            <person name="Beare D.M."/>
            <person name="Beasley O.P."/>
            <person name="Bird C.P."/>
            <person name="Blakey S.E."/>
            <person name="Bridgeman A.M."/>
            <person name="Brown A.J."/>
            <person name="Buck D."/>
            <person name="Burrill W.D."/>
            <person name="Butler A.P."/>
            <person name="Carder C."/>
            <person name="Carter N.P."/>
            <person name="Chapman J.C."/>
            <person name="Clamp M."/>
            <person name="Clark G."/>
            <person name="Clark L.N."/>
            <person name="Clark S.Y."/>
            <person name="Clee C.M."/>
            <person name="Clegg S."/>
            <person name="Cobley V.E."/>
            <person name="Collier R.E."/>
            <person name="Connor R.E."/>
            <person name="Corby N.R."/>
            <person name="Coulson A."/>
            <person name="Coville G.J."/>
            <person name="Deadman R."/>
            <person name="Dhami P.D."/>
            <person name="Dunn M."/>
            <person name="Ellington A.G."/>
            <person name="Frankland J.A."/>
            <person name="Fraser A."/>
            <person name="French L."/>
            <person name="Garner P."/>
            <person name="Grafham D.V."/>
            <person name="Griffiths C."/>
            <person name="Griffiths M.N.D."/>
            <person name="Gwilliam R."/>
            <person name="Hall R.E."/>
            <person name="Hammond S."/>
            <person name="Harley J.L."/>
            <person name="Heath P.D."/>
            <person name="Ho S."/>
            <person name="Holden J.L."/>
            <person name="Howden P.J."/>
            <person name="Huckle E."/>
            <person name="Hunt A.R."/>
            <person name="Hunt S.E."/>
            <person name="Jekosch K."/>
            <person name="Johnson C.M."/>
            <person name="Johnson D."/>
            <person name="Kay M.P."/>
            <person name="Kimberley A.M."/>
            <person name="King A."/>
            <person name="Knights A."/>
            <person name="Laird G.K."/>
            <person name="Lawlor S."/>
            <person name="Lehvaeslaiho M.H."/>
            <person name="Leversha M.A."/>
            <person name="Lloyd C."/>
            <person name="Lloyd D.M."/>
            <person name="Lovell J.D."/>
            <person name="Marsh V.L."/>
            <person name="Martin S.L."/>
            <person name="McConnachie L.J."/>
            <person name="McLay K."/>
            <person name="McMurray A.A."/>
            <person name="Milne S.A."/>
            <person name="Mistry D."/>
            <person name="Moore M.J.F."/>
            <person name="Mullikin J.C."/>
            <person name="Nickerson T."/>
            <person name="Oliver K."/>
            <person name="Parker A."/>
            <person name="Patel R."/>
            <person name="Pearce T.A.V."/>
            <person name="Peck A.I."/>
            <person name="Phillimore B.J.C.T."/>
            <person name="Prathalingam S.R."/>
            <person name="Plumb R.W."/>
            <person name="Ramsay H."/>
            <person name="Rice C.M."/>
            <person name="Ross M.T."/>
            <person name="Scott C.E."/>
            <person name="Sehra H.K."/>
            <person name="Shownkeen R."/>
            <person name="Sims S."/>
            <person name="Skuce C.D."/>
            <person name="Smith M.L."/>
            <person name="Soderlund C."/>
            <person name="Steward C.A."/>
            <person name="Sulston J.E."/>
            <person name="Swann R.M."/>
            <person name="Sycamore N."/>
            <person name="Taylor R."/>
            <person name="Tee L."/>
            <person name="Thomas D.W."/>
            <person name="Thorpe A."/>
            <person name="Tracey A."/>
            <person name="Tromans A.C."/>
            <person name="Vaudin M."/>
            <person name="Wall M."/>
            <person name="Wallis J.M."/>
            <person name="Whitehead S.L."/>
            <person name="Whittaker P."/>
            <person name="Willey D.L."/>
            <person name="Williams L."/>
            <person name="Williams S.A."/>
            <person name="Wilming L."/>
            <person name="Wray P.W."/>
            <person name="Hubbard T."/>
            <person name="Durbin R.M."/>
            <person name="Bentley D.R."/>
            <person name="Beck S."/>
            <person name="Rogers J."/>
        </authorList>
    </citation>
    <scope>NUCLEOTIDE SEQUENCE [LARGE SCALE GENOMIC DNA]</scope>
</reference>
<reference key="4">
    <citation type="submission" date="2005-09" db="EMBL/GenBank/DDBJ databases">
        <authorList>
            <person name="Mural R.J."/>
            <person name="Istrail S."/>
            <person name="Sutton G.G."/>
            <person name="Florea L."/>
            <person name="Halpern A.L."/>
            <person name="Mobarry C.M."/>
            <person name="Lippert R."/>
            <person name="Walenz B."/>
            <person name="Shatkay H."/>
            <person name="Dew I."/>
            <person name="Miller J.R."/>
            <person name="Flanigan M.J."/>
            <person name="Edwards N.J."/>
            <person name="Bolanos R."/>
            <person name="Fasulo D."/>
            <person name="Halldorsson B.V."/>
            <person name="Hannenhalli S."/>
            <person name="Turner R."/>
            <person name="Yooseph S."/>
            <person name="Lu F."/>
            <person name="Nusskern D.R."/>
            <person name="Shue B.C."/>
            <person name="Zheng X.H."/>
            <person name="Zhong F."/>
            <person name="Delcher A.L."/>
            <person name="Huson D.H."/>
            <person name="Kravitz S.A."/>
            <person name="Mouchard L."/>
            <person name="Reinert K."/>
            <person name="Remington K.A."/>
            <person name="Clark A.G."/>
            <person name="Waterman M.S."/>
            <person name="Eichler E.E."/>
            <person name="Adams M.D."/>
            <person name="Hunkapiller M.W."/>
            <person name="Myers E.W."/>
            <person name="Venter J.C."/>
        </authorList>
    </citation>
    <scope>NUCLEOTIDE SEQUENCE [LARGE SCALE GENOMIC DNA]</scope>
</reference>
<reference key="5">
    <citation type="journal article" date="2004" name="Genome Res.">
        <title>The status, quality, and expansion of the NIH full-length cDNA project: the Mammalian Gene Collection (MGC).</title>
        <authorList>
            <consortium name="The MGC Project Team"/>
        </authorList>
    </citation>
    <scope>NUCLEOTIDE SEQUENCE [LARGE SCALE MRNA] (ISOFORM 2)</scope>
    <source>
        <tissue>Muscle</tissue>
    </source>
</reference>
<reference key="6">
    <citation type="journal article" date="2009" name="J. Biol. Chem.">
        <title>Mutation of histidine 105 in the T1 domain of the potassium channel Kv2.1 disrupts heteromerization with Kv6.3 and Kv6.4.</title>
        <authorList>
            <person name="Mederos y Schnitzler M."/>
            <person name="Rinne S."/>
            <person name="Skrobek L."/>
            <person name="Renigunta V."/>
            <person name="Schlichthorl G."/>
            <person name="Derst C."/>
            <person name="Gudermann T."/>
            <person name="Daut J."/>
            <person name="Preisig-Muller R."/>
        </authorList>
    </citation>
    <scope>FUNCTION</scope>
    <scope>SUBUNIT</scope>
</reference>
<proteinExistence type="evidence at protein level"/>
<feature type="chain" id="PRO_0000054073" description="Voltage-gated potassium channel regulatory subunit KCNG1">
    <location>
        <begin position="1"/>
        <end position="513"/>
    </location>
</feature>
<feature type="topological domain" description="Cytoplasmic" evidence="2">
    <location>
        <begin position="1"/>
        <end position="224"/>
    </location>
</feature>
<feature type="transmembrane region" description="Helical; Name=Segment S1" evidence="2">
    <location>
        <begin position="225"/>
        <end position="246"/>
    </location>
</feature>
<feature type="topological domain" description="Extracellular" evidence="2">
    <location>
        <begin position="247"/>
        <end position="267"/>
    </location>
</feature>
<feature type="transmembrane region" description="Helical; Name=Segment S2" evidence="2">
    <location>
        <begin position="268"/>
        <end position="289"/>
    </location>
</feature>
<feature type="topological domain" description="Cytoplasmic" evidence="2">
    <location>
        <begin position="290"/>
        <end position="300"/>
    </location>
</feature>
<feature type="transmembrane region" description="Helical; Name=Segment S3" evidence="2">
    <location>
        <begin position="301"/>
        <end position="321"/>
    </location>
</feature>
<feature type="topological domain" description="Extracellular" evidence="2">
    <location>
        <begin position="322"/>
        <end position="338"/>
    </location>
</feature>
<feature type="transmembrane region" description="Helical; Voltage-sensor; Name=Segment S4" evidence="2">
    <location>
        <begin position="339"/>
        <end position="359"/>
    </location>
</feature>
<feature type="topological domain" description="Cytoplasmic" evidence="2">
    <location>
        <begin position="360"/>
        <end position="374"/>
    </location>
</feature>
<feature type="transmembrane region" description="Helical; Name=Segment S5" evidence="2">
    <location>
        <begin position="375"/>
        <end position="396"/>
    </location>
</feature>
<feature type="topological domain" description="Extracellular" evidence="2">
    <location>
        <begin position="397"/>
        <end position="411"/>
    </location>
</feature>
<feature type="intramembrane region" description="Helical; Name=Pore helix" evidence="2">
    <location>
        <begin position="412"/>
        <end position="423"/>
    </location>
</feature>
<feature type="intramembrane region" evidence="2">
    <location>
        <begin position="424"/>
        <end position="431"/>
    </location>
</feature>
<feature type="topological domain" description="Extracellular" evidence="2">
    <location>
        <begin position="432"/>
        <end position="438"/>
    </location>
</feature>
<feature type="transmembrane region" description="Helical; Name=Segment S6" evidence="2">
    <location>
        <begin position="439"/>
        <end position="467"/>
    </location>
</feature>
<feature type="topological domain" description="Cytoplasmic" evidence="2">
    <location>
        <begin position="468"/>
        <end position="513"/>
    </location>
</feature>
<feature type="region of interest" description="Disordered" evidence="4">
    <location>
        <begin position="184"/>
        <end position="204"/>
    </location>
</feature>
<feature type="short sequence motif" description="Selectivity filter" evidence="2">
    <location>
        <begin position="424"/>
        <end position="429"/>
    </location>
</feature>
<feature type="compositionally biased region" description="Basic and acidic residues" evidence="4">
    <location>
        <begin position="191"/>
        <end position="204"/>
    </location>
</feature>
<feature type="splice variant" id="VSP_001024" description="In isoform 2." evidence="7">
    <original>GHCSQMCHNVFIVESVC</original>
    <variation>VRAHAPRGNAPPRGKGL</variation>
    <location>
        <begin position="259"/>
        <end position="275"/>
    </location>
</feature>
<feature type="splice variant" id="VSP_001025" description="In isoform 2." evidence="7">
    <location>
        <begin position="276"/>
        <end position="513"/>
    </location>
</feature>
<feature type="sequence variant" id="VAR_053860" description="In dbSNP:rs17791052.">
    <original>I</original>
    <variation>M</variation>
    <location>
        <position position="304"/>
    </location>
</feature>
<feature type="sequence conflict" description="In Ref. 1; AAC05635." evidence="8" ref="1">
    <original>G</original>
    <variation>D</variation>
    <location>
        <position position="426"/>
    </location>
</feature>
<feature type="sequence conflict" description="In Ref. 1; AAC05635." evidence="8" ref="1">
    <original>R</original>
    <variation>P</variation>
    <location>
        <position position="465"/>
    </location>
</feature>
<gene>
    <name evidence="10" type="primary">KCNG1</name>
</gene>
<evidence type="ECO:0000250" key="1">
    <source>
        <dbReference type="UniProtKB" id="D4AD53"/>
    </source>
</evidence>
<evidence type="ECO:0000250" key="2">
    <source>
        <dbReference type="UniProtKB" id="P63142"/>
    </source>
</evidence>
<evidence type="ECO:0000250" key="3">
    <source>
        <dbReference type="UniProtKB" id="Q14721"/>
    </source>
</evidence>
<evidence type="ECO:0000256" key="4">
    <source>
        <dbReference type="SAM" id="MobiDB-lite"/>
    </source>
</evidence>
<evidence type="ECO:0000269" key="5">
    <source>
    </source>
</evidence>
<evidence type="ECO:0000269" key="6">
    <source>
    </source>
</evidence>
<evidence type="ECO:0000303" key="7">
    <source>
    </source>
</evidence>
<evidence type="ECO:0000305" key="8"/>
<evidence type="ECO:0000305" key="9">
    <source>
    </source>
</evidence>
<evidence type="ECO:0000312" key="10">
    <source>
        <dbReference type="HGNC" id="HGNC:6248"/>
    </source>
</evidence>
<protein>
    <recommendedName>
        <fullName evidence="8">Voltage-gated potassium channel regulatory subunit KCNG1</fullName>
    </recommendedName>
    <alternativeName>
        <fullName>Potassium voltage-gated channel subfamily G member 1</fullName>
    </alternativeName>
    <alternativeName>
        <fullName>Voltage-gated potassium channel subunit Kv6.1</fullName>
    </alternativeName>
    <alternativeName>
        <fullName>kH2</fullName>
    </alternativeName>
</protein>
<organism>
    <name type="scientific">Homo sapiens</name>
    <name type="common">Human</name>
    <dbReference type="NCBI Taxonomy" id="9606"/>
    <lineage>
        <taxon>Eukaryota</taxon>
        <taxon>Metazoa</taxon>
        <taxon>Chordata</taxon>
        <taxon>Craniata</taxon>
        <taxon>Vertebrata</taxon>
        <taxon>Euteleostomi</taxon>
        <taxon>Mammalia</taxon>
        <taxon>Eutheria</taxon>
        <taxon>Euarchontoglires</taxon>
        <taxon>Primates</taxon>
        <taxon>Haplorrhini</taxon>
        <taxon>Catarrhini</taxon>
        <taxon>Hominidae</taxon>
        <taxon>Homo</taxon>
    </lineage>
</organism>
<sequence length="513" mass="57913">MTLLPGDNSDYDYSALSCTSDASFHPAFLPQRQAIKGAFYRRAQRLRPQDEPRQGCQPEDRRRRIIINVGGIKYSLPWTTLDEFPLTRLGQLKACTNFDDILNVCDDYDVTCNEFFFDRNPGAFGTILTFLRAGKLRLLREMCALSFQEELLYWGIAEDHLDGCCKRRYLQKIEEFAEMVEREEEDDALDSEGRDSEGPAEGEGRLGRCMRRLRDMVERPHSGLPGKVFACLSVLFVTVTAVNLSVSTLPSLREEEEQGHCSQMCHNVFIVESVCVGWFSLEFLLRLIQAPSKFAFLRSPLTLIDLVAILPYYITLLVDGAAAGRRKPGAGNSYLDKVGLVLRVLRALRILYVMRLARHSLGLQTLGLTARRCTREFGLLLLFLCVAIALFAPLLYVIENEMADSPEFTSIPACYWWAVITMTTVGYGDMVPRSTPGQVVALSSILSGILLMAFPVTSIFHTFSRSYLELKQEQERVMFRRAQFLIKTKSQLSVSQDSDILFGSASSDTRDNN</sequence>
<accession>Q9UIX4</accession>
<accession>A8K3S4</accession>
<accession>O43528</accession>
<accession>Q5JXL5</accession>
<accession>Q9BRC1</accession>
<dbReference type="EMBL" id="AF033383">
    <property type="protein sequence ID" value="AAC05635.1"/>
    <property type="molecule type" value="mRNA"/>
</dbReference>
<dbReference type="EMBL" id="AK290689">
    <property type="protein sequence ID" value="BAF83378.1"/>
    <property type="molecule type" value="mRNA"/>
</dbReference>
<dbReference type="EMBL" id="AL050404">
    <property type="status" value="NOT_ANNOTATED_CDS"/>
    <property type="molecule type" value="Genomic_DNA"/>
</dbReference>
<dbReference type="EMBL" id="AL121785">
    <property type="status" value="NOT_ANNOTATED_CDS"/>
    <property type="molecule type" value="Genomic_DNA"/>
</dbReference>
<dbReference type="EMBL" id="CH471077">
    <property type="protein sequence ID" value="EAW75605.1"/>
    <property type="molecule type" value="Genomic_DNA"/>
</dbReference>
<dbReference type="EMBL" id="BC006367">
    <property type="protein sequence ID" value="AAH06367.1"/>
    <property type="molecule type" value="mRNA"/>
</dbReference>
<dbReference type="CCDS" id="CCDS13436.1">
    <molecule id="Q9UIX4-1"/>
</dbReference>
<dbReference type="PIR" id="JC5920">
    <property type="entry name" value="JC5920"/>
</dbReference>
<dbReference type="RefSeq" id="NP_002228.2">
    <molecule id="Q9UIX4-1"/>
    <property type="nucleotide sequence ID" value="NM_002237.3"/>
</dbReference>
<dbReference type="RefSeq" id="XP_006723848.1">
    <molecule id="Q9UIX4-1"/>
    <property type="nucleotide sequence ID" value="XM_006723785.4"/>
</dbReference>
<dbReference type="RefSeq" id="XP_011527102.1">
    <molecule id="Q9UIX4-1"/>
    <property type="nucleotide sequence ID" value="XM_011528800.3"/>
</dbReference>
<dbReference type="RefSeq" id="XP_011527103.1">
    <molecule id="Q9UIX4-1"/>
    <property type="nucleotide sequence ID" value="XM_011528801.2"/>
</dbReference>
<dbReference type="RefSeq" id="XP_011527104.1">
    <molecule id="Q9UIX4-1"/>
    <property type="nucleotide sequence ID" value="XM_011528802.3"/>
</dbReference>
<dbReference type="RefSeq" id="XP_011527105.1">
    <molecule id="Q9UIX4-1"/>
    <property type="nucleotide sequence ID" value="XM_011528803.3"/>
</dbReference>
<dbReference type="RefSeq" id="XP_011527106.1">
    <molecule id="Q9UIX4-1"/>
    <property type="nucleotide sequence ID" value="XM_011528804.2"/>
</dbReference>
<dbReference type="RefSeq" id="XP_011527107.1">
    <property type="nucleotide sequence ID" value="XM_011528805.2"/>
</dbReference>
<dbReference type="RefSeq" id="XP_011527108.1">
    <molecule id="Q9UIX4-1"/>
    <property type="nucleotide sequence ID" value="XM_011528806.3"/>
</dbReference>
<dbReference type="RefSeq" id="XP_047296097.1">
    <molecule id="Q9UIX4-1"/>
    <property type="nucleotide sequence ID" value="XM_047440141.1"/>
</dbReference>
<dbReference type="RefSeq" id="XP_047296098.1">
    <molecule id="Q9UIX4-1"/>
    <property type="nucleotide sequence ID" value="XM_047440142.1"/>
</dbReference>
<dbReference type="RefSeq" id="XP_047296099.1">
    <molecule id="Q9UIX4-1"/>
    <property type="nucleotide sequence ID" value="XM_047440143.1"/>
</dbReference>
<dbReference type="RefSeq" id="XP_054179390.1">
    <molecule id="Q9UIX4-1"/>
    <property type="nucleotide sequence ID" value="XM_054323415.1"/>
</dbReference>
<dbReference type="RefSeq" id="XP_054179391.1">
    <molecule id="Q9UIX4-1"/>
    <property type="nucleotide sequence ID" value="XM_054323416.1"/>
</dbReference>
<dbReference type="RefSeq" id="XP_054179392.1">
    <molecule id="Q9UIX4-1"/>
    <property type="nucleotide sequence ID" value="XM_054323417.1"/>
</dbReference>
<dbReference type="RefSeq" id="XP_054179393.1">
    <molecule id="Q9UIX4-1"/>
    <property type="nucleotide sequence ID" value="XM_054323418.1"/>
</dbReference>
<dbReference type="RefSeq" id="XP_054179394.1">
    <molecule id="Q9UIX4-1"/>
    <property type="nucleotide sequence ID" value="XM_054323419.1"/>
</dbReference>
<dbReference type="RefSeq" id="XP_054179395.1">
    <molecule id="Q9UIX4-1"/>
    <property type="nucleotide sequence ID" value="XM_054323420.1"/>
</dbReference>
<dbReference type="RefSeq" id="XP_054179396.1">
    <molecule id="Q9UIX4-1"/>
    <property type="nucleotide sequence ID" value="XM_054323421.1"/>
</dbReference>
<dbReference type="RefSeq" id="XP_054179397.1">
    <molecule id="Q9UIX4-1"/>
    <property type="nucleotide sequence ID" value="XM_054323422.1"/>
</dbReference>
<dbReference type="RefSeq" id="XP_054179398.1">
    <molecule id="Q9UIX4-1"/>
    <property type="nucleotide sequence ID" value="XM_054323423.1"/>
</dbReference>
<dbReference type="RefSeq" id="XP_054179399.1">
    <molecule id="Q9UIX4-1"/>
    <property type="nucleotide sequence ID" value="XM_054323424.1"/>
</dbReference>
<dbReference type="SMR" id="Q9UIX4"/>
<dbReference type="BioGRID" id="109957">
    <property type="interactions" value="23"/>
</dbReference>
<dbReference type="CORUM" id="Q9UIX4"/>
<dbReference type="FunCoup" id="Q9UIX4">
    <property type="interactions" value="159"/>
</dbReference>
<dbReference type="IntAct" id="Q9UIX4">
    <property type="interactions" value="15"/>
</dbReference>
<dbReference type="STRING" id="9606.ENSP00000360626"/>
<dbReference type="ChEMBL" id="CHEMBL2362996"/>
<dbReference type="DrugBank" id="DB00228">
    <property type="generic name" value="Enflurane"/>
</dbReference>
<dbReference type="DrugBank" id="DB01110">
    <property type="generic name" value="Miconazole"/>
</dbReference>
<dbReference type="DrugBank" id="DB01069">
    <property type="generic name" value="Promethazine"/>
</dbReference>
<dbReference type="DrugCentral" id="Q9UIX4"/>
<dbReference type="TCDB" id="1.A.1.2.27">
    <property type="family name" value="the voltage-gated ion channel (vic) superfamily"/>
</dbReference>
<dbReference type="GlyGen" id="Q9UIX4">
    <property type="glycosylation" value="1 site"/>
</dbReference>
<dbReference type="iPTMnet" id="Q9UIX4"/>
<dbReference type="PhosphoSitePlus" id="Q9UIX4"/>
<dbReference type="BioMuta" id="KCNG1"/>
<dbReference type="DMDM" id="24418479"/>
<dbReference type="MassIVE" id="Q9UIX4"/>
<dbReference type="PaxDb" id="9606-ENSP00000360626"/>
<dbReference type="PeptideAtlas" id="Q9UIX4"/>
<dbReference type="ProteomicsDB" id="84574">
    <molecule id="Q9UIX4-1"/>
</dbReference>
<dbReference type="ProteomicsDB" id="84575">
    <molecule id="Q9UIX4-2"/>
</dbReference>
<dbReference type="Antibodypedia" id="13829">
    <property type="antibodies" value="116 antibodies from 22 providers"/>
</dbReference>
<dbReference type="DNASU" id="3755"/>
<dbReference type="Ensembl" id="ENST00000371571.5">
    <molecule id="Q9UIX4-1"/>
    <property type="protein sequence ID" value="ENSP00000360626.4"/>
    <property type="gene ID" value="ENSG00000026559.14"/>
</dbReference>
<dbReference type="GeneID" id="3755"/>
<dbReference type="KEGG" id="hsa:3755"/>
<dbReference type="MANE-Select" id="ENST00000371571.5">
    <property type="protein sequence ID" value="ENSP00000360626.4"/>
    <property type="RefSeq nucleotide sequence ID" value="NM_002237.4"/>
    <property type="RefSeq protein sequence ID" value="NP_002228.2"/>
</dbReference>
<dbReference type="UCSC" id="uc002xwa.5">
    <molecule id="Q9UIX4-1"/>
    <property type="organism name" value="human"/>
</dbReference>
<dbReference type="AGR" id="HGNC:6248"/>
<dbReference type="CTD" id="3755"/>
<dbReference type="DisGeNET" id="3755"/>
<dbReference type="GeneCards" id="KCNG1"/>
<dbReference type="HGNC" id="HGNC:6248">
    <property type="gene designation" value="KCNG1"/>
</dbReference>
<dbReference type="HPA" id="ENSG00000026559">
    <property type="expression patterns" value="Tissue enriched (endometrium)"/>
</dbReference>
<dbReference type="MalaCards" id="KCNG1"/>
<dbReference type="MIM" id="603788">
    <property type="type" value="gene"/>
</dbReference>
<dbReference type="neXtProt" id="NX_Q9UIX4"/>
<dbReference type="OpenTargets" id="ENSG00000026559"/>
<dbReference type="PharmGKB" id="PA30034"/>
<dbReference type="VEuPathDB" id="HostDB:ENSG00000026559"/>
<dbReference type="eggNOG" id="KOG3713">
    <property type="taxonomic scope" value="Eukaryota"/>
</dbReference>
<dbReference type="GeneTree" id="ENSGT00940000159686"/>
<dbReference type="HOGENOM" id="CLU_011722_4_1_1"/>
<dbReference type="InParanoid" id="Q9UIX4"/>
<dbReference type="OMA" id="CAFRNIL"/>
<dbReference type="OrthoDB" id="296522at2759"/>
<dbReference type="PAN-GO" id="Q9UIX4">
    <property type="GO annotations" value="5 GO annotations based on evolutionary models"/>
</dbReference>
<dbReference type="PhylomeDB" id="Q9UIX4"/>
<dbReference type="TreeFam" id="TF313103"/>
<dbReference type="PathwayCommons" id="Q9UIX4"/>
<dbReference type="Reactome" id="R-HSA-1296072">
    <property type="pathway name" value="Voltage gated Potassium channels"/>
</dbReference>
<dbReference type="SignaLink" id="Q9UIX4"/>
<dbReference type="BioGRID-ORCS" id="3755">
    <property type="hits" value="12 hits in 1138 CRISPR screens"/>
</dbReference>
<dbReference type="ChiTaRS" id="KCNG1">
    <property type="organism name" value="human"/>
</dbReference>
<dbReference type="GeneWiki" id="KCNG1"/>
<dbReference type="GenomeRNAi" id="3755"/>
<dbReference type="Pharos" id="Q9UIX4">
    <property type="development level" value="Tclin"/>
</dbReference>
<dbReference type="PRO" id="PR:Q9UIX4"/>
<dbReference type="Proteomes" id="UP000005640">
    <property type="component" value="Chromosome 20"/>
</dbReference>
<dbReference type="RNAct" id="Q9UIX4">
    <property type="molecule type" value="protein"/>
</dbReference>
<dbReference type="Bgee" id="ENSG00000026559">
    <property type="expression patterns" value="Expressed in cortical plate and 147 other cell types or tissues"/>
</dbReference>
<dbReference type="ExpressionAtlas" id="Q9UIX4">
    <property type="expression patterns" value="baseline and differential"/>
</dbReference>
<dbReference type="GO" id="GO:0016020">
    <property type="term" value="C:membrane"/>
    <property type="evidence" value="ECO:0000318"/>
    <property type="project" value="GO_Central"/>
</dbReference>
<dbReference type="GO" id="GO:0005886">
    <property type="term" value="C:plasma membrane"/>
    <property type="evidence" value="ECO:0000304"/>
    <property type="project" value="Reactome"/>
</dbReference>
<dbReference type="GO" id="GO:0008076">
    <property type="term" value="C:voltage-gated potassium channel complex"/>
    <property type="evidence" value="ECO:0000314"/>
    <property type="project" value="UniProtKB"/>
</dbReference>
<dbReference type="GO" id="GO:0015459">
    <property type="term" value="F:potassium channel regulator activity"/>
    <property type="evidence" value="ECO:0000314"/>
    <property type="project" value="UniProtKB"/>
</dbReference>
<dbReference type="GO" id="GO:0005249">
    <property type="term" value="F:voltage-gated potassium channel activity"/>
    <property type="evidence" value="ECO:0007669"/>
    <property type="project" value="InterPro"/>
</dbReference>
<dbReference type="GO" id="GO:0001508">
    <property type="term" value="P:action potential"/>
    <property type="evidence" value="ECO:0000318"/>
    <property type="project" value="GO_Central"/>
</dbReference>
<dbReference type="GO" id="GO:0071805">
    <property type="term" value="P:potassium ion transmembrane transport"/>
    <property type="evidence" value="ECO:0000318"/>
    <property type="project" value="GO_Central"/>
</dbReference>
<dbReference type="GO" id="GO:0006813">
    <property type="term" value="P:potassium ion transport"/>
    <property type="evidence" value="ECO:0000303"/>
    <property type="project" value="UniProtKB"/>
</dbReference>
<dbReference type="GO" id="GO:0051260">
    <property type="term" value="P:protein homooligomerization"/>
    <property type="evidence" value="ECO:0007669"/>
    <property type="project" value="InterPro"/>
</dbReference>
<dbReference type="GO" id="GO:1901379">
    <property type="term" value="P:regulation of potassium ion transmembrane transport"/>
    <property type="evidence" value="ECO:0000250"/>
    <property type="project" value="UniProtKB"/>
</dbReference>
<dbReference type="CDD" id="cd18421">
    <property type="entry name" value="BTB_POZ_KCNG1_2"/>
    <property type="match status" value="1"/>
</dbReference>
<dbReference type="FunFam" id="1.20.120.350:FF:000024">
    <property type="entry name" value="Potassium voltage-gated channel subfamily G member 1"/>
    <property type="match status" value="1"/>
</dbReference>
<dbReference type="FunFam" id="1.10.287.70:FF:000005">
    <property type="entry name" value="potassium voltage-gated channel subfamily G member 1"/>
    <property type="match status" value="1"/>
</dbReference>
<dbReference type="FunFam" id="3.30.710.10:FF:000019">
    <property type="entry name" value="Potassium voltage-gated channel, subfamily G, member 1"/>
    <property type="match status" value="1"/>
</dbReference>
<dbReference type="Gene3D" id="1.10.287.70">
    <property type="match status" value="1"/>
</dbReference>
<dbReference type="Gene3D" id="3.30.710.10">
    <property type="entry name" value="Potassium Channel Kv1.1, Chain A"/>
    <property type="match status" value="1"/>
</dbReference>
<dbReference type="Gene3D" id="1.20.120.350">
    <property type="entry name" value="Voltage-gated potassium channels. Chain C"/>
    <property type="match status" value="1"/>
</dbReference>
<dbReference type="InterPro" id="IPR000210">
    <property type="entry name" value="BTB/POZ_dom"/>
</dbReference>
<dbReference type="InterPro" id="IPR005821">
    <property type="entry name" value="Ion_trans_dom"/>
</dbReference>
<dbReference type="InterPro" id="IPR003968">
    <property type="entry name" value="K_chnl_volt-dep_Kv"/>
</dbReference>
<dbReference type="InterPro" id="IPR003969">
    <property type="entry name" value="K_chnl_volt-dep_Kv6"/>
</dbReference>
<dbReference type="InterPro" id="IPR011333">
    <property type="entry name" value="SKP1/BTB/POZ_sf"/>
</dbReference>
<dbReference type="InterPro" id="IPR003131">
    <property type="entry name" value="T1-type_BTB"/>
</dbReference>
<dbReference type="InterPro" id="IPR028325">
    <property type="entry name" value="VG_K_chnl"/>
</dbReference>
<dbReference type="InterPro" id="IPR027359">
    <property type="entry name" value="Volt_channel_dom_sf"/>
</dbReference>
<dbReference type="PANTHER" id="PTHR11537:SF88">
    <property type="entry name" value="POTASSIUM VOLTAGE-GATED CHANNEL SUBFAMILY G MEMBER 1"/>
    <property type="match status" value="1"/>
</dbReference>
<dbReference type="PANTHER" id="PTHR11537">
    <property type="entry name" value="VOLTAGE-GATED POTASSIUM CHANNEL"/>
    <property type="match status" value="1"/>
</dbReference>
<dbReference type="Pfam" id="PF02214">
    <property type="entry name" value="BTB_2"/>
    <property type="match status" value="1"/>
</dbReference>
<dbReference type="Pfam" id="PF00520">
    <property type="entry name" value="Ion_trans"/>
    <property type="match status" value="1"/>
</dbReference>
<dbReference type="PRINTS" id="PR00169">
    <property type="entry name" value="KCHANNEL"/>
</dbReference>
<dbReference type="PRINTS" id="PR01492">
    <property type="entry name" value="KV6CHANNEL"/>
</dbReference>
<dbReference type="PRINTS" id="PR01491">
    <property type="entry name" value="KVCHANNEL"/>
</dbReference>
<dbReference type="SMART" id="SM00225">
    <property type="entry name" value="BTB"/>
    <property type="match status" value="1"/>
</dbReference>
<dbReference type="SUPFAM" id="SSF54695">
    <property type="entry name" value="POZ domain"/>
    <property type="match status" value="1"/>
</dbReference>
<dbReference type="SUPFAM" id="SSF81324">
    <property type="entry name" value="Voltage-gated potassium channels"/>
    <property type="match status" value="1"/>
</dbReference>
<name>KCNG1_HUMAN</name>
<comment type="function">
    <text evidence="5">Regulatory alpha-subunit of the voltage-gated potassium (Kv) channel which, when coassembled with KCNB1 or KCNB2, can modulate their expression and their gating kinetics by acting on deactivation upon repolarization and inactivation during maintained depolarization (PubMed:19074135). Potassium channel subunit that does not form functional channels by itself (PubMed:19074135).</text>
</comment>
<comment type="subunit">
    <text evidence="1 9">Heterotetramer with KCNB1 (Probable). Heterotetramer with KCNB2 (By similarity).</text>
</comment>
<comment type="subcellular location">
    <subcellularLocation>
        <location evidence="3">Cell membrane</location>
        <topology evidence="8">Multi-pass membrane protein</topology>
    </subcellularLocation>
    <text evidence="3">Colocalizes with KCNB1 at the plasma membrane.</text>
</comment>
<comment type="alternative products">
    <event type="alternative splicing"/>
    <isoform>
        <id>Q9UIX4-1</id>
        <name>1</name>
        <sequence type="displayed"/>
    </isoform>
    <isoform>
        <id>Q9UIX4-2</id>
        <name>2</name>
        <sequence type="described" ref="VSP_001024 VSP_001025"/>
    </isoform>
</comment>
<comment type="tissue specificity">
    <text evidence="6">Expressed in brain and placenta, and at much lower levels in kidney and pancreas (PubMed:9434767).</text>
</comment>
<comment type="domain">
    <text evidence="2">The transmembrane segment S4 functions as a voltage-sensor and is characterized by a series of positively charged amino acids at every third position. Channel opening and closing is effected by a conformation change that affects the position and orientation of the voltage-sensor paddle formed by S3 and S4 within the membrane. A transmembrane electric field that is positive inside would push the positively charged S4 segment outwards, thereby opening the pore, while a field that is negative inside would pull the S4 segment inwards and close the pore. Changes in the position and orientation of S4 are then transmitted to the activation gate formed by the inner helix bundle via the S4-S5 linker region.</text>
</comment>
<comment type="similarity">
    <text evidence="8">Belongs to the potassium channel family. G (TC 1.A.1.2) subfamily. Kv6.1/KCNG1 sub-subfamily.</text>
</comment>